<dbReference type="EMBL" id="DP000009">
    <property type="protein sequence ID" value="ABF95912.1"/>
    <property type="molecule type" value="Genomic_DNA"/>
</dbReference>
<dbReference type="EMBL" id="AP008209">
    <property type="protein sequence ID" value="BAF12013.1"/>
    <property type="molecule type" value="Genomic_DNA"/>
</dbReference>
<dbReference type="EMBL" id="AP014959">
    <property type="protein sequence ID" value="BAS84174.1"/>
    <property type="molecule type" value="Genomic_DNA"/>
</dbReference>
<dbReference type="EMBL" id="CM000140">
    <property type="protein sequence ID" value="EEE59052.1"/>
    <property type="status" value="ALT_SEQ"/>
    <property type="molecule type" value="Genomic_DNA"/>
</dbReference>
<dbReference type="EMBL" id="AK109114">
    <property type="protein sequence ID" value="BAG98607.1"/>
    <property type="molecule type" value="mRNA"/>
</dbReference>
<dbReference type="RefSeq" id="XP_015630001.1">
    <property type="nucleotide sequence ID" value="XM_015774515.1"/>
</dbReference>
<dbReference type="SMR" id="Q10LI8"/>
<dbReference type="FunCoup" id="Q10LI8">
    <property type="interactions" value="234"/>
</dbReference>
<dbReference type="PaxDb" id="39947-Q10LI8"/>
<dbReference type="EnsemblPlants" id="Os03t0347500-01">
    <property type="protein sequence ID" value="Os03t0347500-01"/>
    <property type="gene ID" value="Os03g0347500"/>
</dbReference>
<dbReference type="Gramene" id="Os03t0347500-01">
    <property type="protein sequence ID" value="Os03t0347500-01"/>
    <property type="gene ID" value="Os03g0347500"/>
</dbReference>
<dbReference type="KEGG" id="dosa:Os03g0347500"/>
<dbReference type="eggNOG" id="KOG1623">
    <property type="taxonomic scope" value="Eukaryota"/>
</dbReference>
<dbReference type="HOGENOM" id="CLU_048643_4_0_1"/>
<dbReference type="InParanoid" id="Q10LI8"/>
<dbReference type="OMA" id="KLVCAMN"/>
<dbReference type="OrthoDB" id="409725at2759"/>
<dbReference type="Proteomes" id="UP000000763">
    <property type="component" value="Chromosome 3"/>
</dbReference>
<dbReference type="Proteomes" id="UP000007752">
    <property type="component" value="Chromosome 3"/>
</dbReference>
<dbReference type="Proteomes" id="UP000059680">
    <property type="component" value="Chromosome 3"/>
</dbReference>
<dbReference type="GO" id="GO:0016020">
    <property type="term" value="C:membrane"/>
    <property type="evidence" value="ECO:0000318"/>
    <property type="project" value="GO_Central"/>
</dbReference>
<dbReference type="GO" id="GO:0005886">
    <property type="term" value="C:plasma membrane"/>
    <property type="evidence" value="ECO:0000250"/>
    <property type="project" value="UniProtKB"/>
</dbReference>
<dbReference type="GO" id="GO:0051119">
    <property type="term" value="F:sugar transmembrane transporter activity"/>
    <property type="evidence" value="ECO:0000250"/>
    <property type="project" value="UniProtKB"/>
</dbReference>
<dbReference type="GO" id="GO:0008643">
    <property type="term" value="P:carbohydrate transport"/>
    <property type="evidence" value="ECO:0000318"/>
    <property type="project" value="GO_Central"/>
</dbReference>
<dbReference type="FunFam" id="1.20.1280.290:FF:000001">
    <property type="entry name" value="Bidirectional sugar transporter SWEET"/>
    <property type="match status" value="1"/>
</dbReference>
<dbReference type="FunFam" id="1.20.1280.290:FF:000033">
    <property type="entry name" value="Bidirectional sugar transporter SWEET"/>
    <property type="match status" value="1"/>
</dbReference>
<dbReference type="Gene3D" id="1.20.1280.290">
    <property type="match status" value="2"/>
</dbReference>
<dbReference type="InterPro" id="IPR047664">
    <property type="entry name" value="SWEET"/>
</dbReference>
<dbReference type="InterPro" id="IPR004316">
    <property type="entry name" value="SWEET_rpt"/>
</dbReference>
<dbReference type="PANTHER" id="PTHR10791:SF222">
    <property type="entry name" value="BIDIRECTIONAL SUGAR TRANSPORTER SWEET15"/>
    <property type="match status" value="1"/>
</dbReference>
<dbReference type="PANTHER" id="PTHR10791">
    <property type="entry name" value="RAG1-ACTIVATING PROTEIN 1"/>
    <property type="match status" value="1"/>
</dbReference>
<dbReference type="Pfam" id="PF03083">
    <property type="entry name" value="MtN3_slv"/>
    <property type="match status" value="2"/>
</dbReference>
<protein>
    <recommendedName>
        <fullName>Bidirectional sugar transporter SWEET12</fullName>
        <shortName>OsSWEET12</shortName>
    </recommendedName>
</protein>
<organism>
    <name type="scientific">Oryza sativa subsp. japonica</name>
    <name type="common">Rice</name>
    <dbReference type="NCBI Taxonomy" id="39947"/>
    <lineage>
        <taxon>Eukaryota</taxon>
        <taxon>Viridiplantae</taxon>
        <taxon>Streptophyta</taxon>
        <taxon>Embryophyta</taxon>
        <taxon>Tracheophyta</taxon>
        <taxon>Spermatophyta</taxon>
        <taxon>Magnoliopsida</taxon>
        <taxon>Liliopsida</taxon>
        <taxon>Poales</taxon>
        <taxon>Poaceae</taxon>
        <taxon>BOP clade</taxon>
        <taxon>Oryzoideae</taxon>
        <taxon>Oryzeae</taxon>
        <taxon>Oryzinae</taxon>
        <taxon>Oryza</taxon>
        <taxon>Oryza sativa</taxon>
    </lineage>
</organism>
<evidence type="ECO:0000250" key="1">
    <source>
        <dbReference type="UniProtKB" id="Q8L9J7"/>
    </source>
</evidence>
<evidence type="ECO:0000255" key="2"/>
<evidence type="ECO:0000256" key="3">
    <source>
        <dbReference type="SAM" id="MobiDB-lite"/>
    </source>
</evidence>
<evidence type="ECO:0000269" key="4">
    <source>
    </source>
</evidence>
<evidence type="ECO:0000303" key="5">
    <source>
    </source>
</evidence>
<evidence type="ECO:0000305" key="6"/>
<keyword id="KW-1003">Cell membrane</keyword>
<keyword id="KW-0472">Membrane</keyword>
<keyword id="KW-1185">Reference proteome</keyword>
<keyword id="KW-0677">Repeat</keyword>
<keyword id="KW-0762">Sugar transport</keyword>
<keyword id="KW-0812">Transmembrane</keyword>
<keyword id="KW-1133">Transmembrane helix</keyword>
<keyword id="KW-0813">Transport</keyword>
<name>SWT12_ORYSJ</name>
<feature type="chain" id="PRO_0000404134" description="Bidirectional sugar transporter SWEET12">
    <location>
        <begin position="1"/>
        <end position="300"/>
    </location>
</feature>
<feature type="topological domain" description="Extracellular" evidence="2">
    <location>
        <begin position="1"/>
        <end position="4"/>
    </location>
</feature>
<feature type="transmembrane region" description="Helical; Name=1" evidence="2">
    <location>
        <begin position="5"/>
        <end position="25"/>
    </location>
</feature>
<feature type="topological domain" description="Cytoplasmic" evidence="2">
    <location>
        <begin position="26"/>
        <end position="38"/>
    </location>
</feature>
<feature type="transmembrane region" description="Helical; Name=2" evidence="2">
    <location>
        <begin position="39"/>
        <end position="61"/>
    </location>
</feature>
<feature type="topological domain" description="Extracellular" evidence="2">
    <location>
        <begin position="62"/>
        <end position="67"/>
    </location>
</feature>
<feature type="transmembrane region" description="Helical; Name=3" evidence="2">
    <location>
        <begin position="68"/>
        <end position="88"/>
    </location>
</feature>
<feature type="topological domain" description="Cytoplasmic" evidence="2">
    <location>
        <begin position="89"/>
        <end position="99"/>
    </location>
</feature>
<feature type="transmembrane region" description="Helical; Name=4" evidence="2">
    <location>
        <begin position="100"/>
        <end position="120"/>
    </location>
</feature>
<feature type="topological domain" description="Extracellular" evidence="2">
    <location>
        <begin position="121"/>
        <end position="128"/>
    </location>
</feature>
<feature type="transmembrane region" description="Helical; Name=5" evidence="2">
    <location>
        <begin position="129"/>
        <end position="149"/>
    </location>
</feature>
<feature type="topological domain" description="Cytoplasmic" evidence="2">
    <location>
        <begin position="150"/>
        <end position="162"/>
    </location>
</feature>
<feature type="transmembrane region" description="Helical; Name=6" evidence="2">
    <location>
        <begin position="163"/>
        <end position="183"/>
    </location>
</feature>
<feature type="topological domain" description="Extracellular" evidence="2">
    <location>
        <begin position="184"/>
        <end position="185"/>
    </location>
</feature>
<feature type="transmembrane region" description="Helical; Name=7" evidence="2">
    <location>
        <begin position="186"/>
        <end position="206"/>
    </location>
</feature>
<feature type="topological domain" description="Cytoplasmic" evidence="2">
    <location>
        <begin position="207"/>
        <end position="300"/>
    </location>
</feature>
<feature type="domain" description="MtN3/slv 1">
    <location>
        <begin position="8"/>
        <end position="92"/>
    </location>
</feature>
<feature type="domain" description="MtN3/slv 2">
    <location>
        <begin position="131"/>
        <end position="213"/>
    </location>
</feature>
<feature type="region of interest" description="Disordered" evidence="3">
    <location>
        <begin position="256"/>
        <end position="300"/>
    </location>
</feature>
<feature type="compositionally biased region" description="Basic and acidic residues" evidence="3">
    <location>
        <begin position="269"/>
        <end position="280"/>
    </location>
</feature>
<feature type="compositionally biased region" description="Pro residues" evidence="3">
    <location>
        <begin position="284"/>
        <end position="294"/>
    </location>
</feature>
<sequence>MVQALVFAVGIVGNILSFLVILAPVPTFYRVYKKKSTESFQSVPYAVALLSAMLWLYYALLTSDLLLLSINSIGCLVESLYLTVYLLYAPRQAMAFTLKLVCAMNLALFAAVVAALQLLVKATDRRVTLAGGIGASFALAVFVAPLTIIRQVIRTKSVEFMPFWLSFFLTLSAVVWFFYGLLMKDFFVATPNVLGLLFGLAQMVLYVVYKNPKKNSAVSEAAAAQQVEVKDQQQLQMQLQASPAVAPLDVDADADADLEAAAPATPQRPADDDAIDHRSVVVDIPPPPQPPPALPAVEVA</sequence>
<accession>Q10LI8</accession>
<accession>A0A0P0VXH5</accession>
<accession>B9F8F4</accession>
<reference key="1">
    <citation type="journal article" date="2005" name="Genome Res.">
        <title>Sequence, annotation, and analysis of synteny between rice chromosome 3 and diverged grass species.</title>
        <authorList>
            <consortium name="The rice chromosome 3 sequencing consortium"/>
            <person name="Buell C.R."/>
            <person name="Yuan Q."/>
            <person name="Ouyang S."/>
            <person name="Liu J."/>
            <person name="Zhu W."/>
            <person name="Wang A."/>
            <person name="Maiti R."/>
            <person name="Haas B."/>
            <person name="Wortman J."/>
            <person name="Pertea M."/>
            <person name="Jones K.M."/>
            <person name="Kim M."/>
            <person name="Overton L."/>
            <person name="Tsitrin T."/>
            <person name="Fadrosh D."/>
            <person name="Bera J."/>
            <person name="Weaver B."/>
            <person name="Jin S."/>
            <person name="Johri S."/>
            <person name="Reardon M."/>
            <person name="Webb K."/>
            <person name="Hill J."/>
            <person name="Moffat K."/>
            <person name="Tallon L."/>
            <person name="Van Aken S."/>
            <person name="Lewis M."/>
            <person name="Utterback T."/>
            <person name="Feldblyum T."/>
            <person name="Zismann V."/>
            <person name="Iobst S."/>
            <person name="Hsiao J."/>
            <person name="de Vazeille A.R."/>
            <person name="Salzberg S.L."/>
            <person name="White O."/>
            <person name="Fraser C.M."/>
            <person name="Yu Y."/>
            <person name="Kim H."/>
            <person name="Rambo T."/>
            <person name="Currie J."/>
            <person name="Collura K."/>
            <person name="Kernodle-Thompson S."/>
            <person name="Wei F."/>
            <person name="Kudrna K."/>
            <person name="Ammiraju J.S.S."/>
            <person name="Luo M."/>
            <person name="Goicoechea J.L."/>
            <person name="Wing R.A."/>
            <person name="Henry D."/>
            <person name="Oates R."/>
            <person name="Palmer M."/>
            <person name="Pries G."/>
            <person name="Saski C."/>
            <person name="Simmons J."/>
            <person name="Soderlund C."/>
            <person name="Nelson W."/>
            <person name="de la Bastide M."/>
            <person name="Spiegel L."/>
            <person name="Nascimento L."/>
            <person name="Huang E."/>
            <person name="Preston R."/>
            <person name="Zutavern T."/>
            <person name="Palmer L."/>
            <person name="O'Shaughnessy A."/>
            <person name="Dike S."/>
            <person name="McCombie W.R."/>
            <person name="Minx P."/>
            <person name="Cordum H."/>
            <person name="Wilson R."/>
            <person name="Jin W."/>
            <person name="Lee H.R."/>
            <person name="Jiang J."/>
            <person name="Jackson S."/>
        </authorList>
    </citation>
    <scope>NUCLEOTIDE SEQUENCE [LARGE SCALE GENOMIC DNA]</scope>
    <source>
        <strain>cv. Nipponbare</strain>
    </source>
</reference>
<reference key="2">
    <citation type="journal article" date="2005" name="Nature">
        <title>The map-based sequence of the rice genome.</title>
        <authorList>
            <consortium name="International rice genome sequencing project (IRGSP)"/>
        </authorList>
    </citation>
    <scope>NUCLEOTIDE SEQUENCE [LARGE SCALE GENOMIC DNA]</scope>
    <source>
        <strain>cv. Nipponbare</strain>
    </source>
</reference>
<reference key="3">
    <citation type="journal article" date="2008" name="Nucleic Acids Res.">
        <title>The rice annotation project database (RAP-DB): 2008 update.</title>
        <authorList>
            <consortium name="The rice annotation project (RAP)"/>
        </authorList>
    </citation>
    <scope>GENOME REANNOTATION</scope>
    <source>
        <strain>cv. Nipponbare</strain>
    </source>
</reference>
<reference key="4">
    <citation type="journal article" date="2013" name="Rice">
        <title>Improvement of the Oryza sativa Nipponbare reference genome using next generation sequence and optical map data.</title>
        <authorList>
            <person name="Kawahara Y."/>
            <person name="de la Bastide M."/>
            <person name="Hamilton J.P."/>
            <person name="Kanamori H."/>
            <person name="McCombie W.R."/>
            <person name="Ouyang S."/>
            <person name="Schwartz D.C."/>
            <person name="Tanaka T."/>
            <person name="Wu J."/>
            <person name="Zhou S."/>
            <person name="Childs K.L."/>
            <person name="Davidson R.M."/>
            <person name="Lin H."/>
            <person name="Quesada-Ocampo L."/>
            <person name="Vaillancourt B."/>
            <person name="Sakai H."/>
            <person name="Lee S.S."/>
            <person name="Kim J."/>
            <person name="Numa H."/>
            <person name="Itoh T."/>
            <person name="Buell C.R."/>
            <person name="Matsumoto T."/>
        </authorList>
    </citation>
    <scope>GENOME REANNOTATION</scope>
    <source>
        <strain>cv. Nipponbare</strain>
    </source>
</reference>
<reference key="5">
    <citation type="journal article" date="2005" name="PLoS Biol.">
        <title>The genomes of Oryza sativa: a history of duplications.</title>
        <authorList>
            <person name="Yu J."/>
            <person name="Wang J."/>
            <person name="Lin W."/>
            <person name="Li S."/>
            <person name="Li H."/>
            <person name="Zhou J."/>
            <person name="Ni P."/>
            <person name="Dong W."/>
            <person name="Hu S."/>
            <person name="Zeng C."/>
            <person name="Zhang J."/>
            <person name="Zhang Y."/>
            <person name="Li R."/>
            <person name="Xu Z."/>
            <person name="Li S."/>
            <person name="Li X."/>
            <person name="Zheng H."/>
            <person name="Cong L."/>
            <person name="Lin L."/>
            <person name="Yin J."/>
            <person name="Geng J."/>
            <person name="Li G."/>
            <person name="Shi J."/>
            <person name="Liu J."/>
            <person name="Lv H."/>
            <person name="Li J."/>
            <person name="Wang J."/>
            <person name="Deng Y."/>
            <person name="Ran L."/>
            <person name="Shi X."/>
            <person name="Wang X."/>
            <person name="Wu Q."/>
            <person name="Li C."/>
            <person name="Ren X."/>
            <person name="Wang J."/>
            <person name="Wang X."/>
            <person name="Li D."/>
            <person name="Liu D."/>
            <person name="Zhang X."/>
            <person name="Ji Z."/>
            <person name="Zhao W."/>
            <person name="Sun Y."/>
            <person name="Zhang Z."/>
            <person name="Bao J."/>
            <person name="Han Y."/>
            <person name="Dong L."/>
            <person name="Ji J."/>
            <person name="Chen P."/>
            <person name="Wu S."/>
            <person name="Liu J."/>
            <person name="Xiao Y."/>
            <person name="Bu D."/>
            <person name="Tan J."/>
            <person name="Yang L."/>
            <person name="Ye C."/>
            <person name="Zhang J."/>
            <person name="Xu J."/>
            <person name="Zhou Y."/>
            <person name="Yu Y."/>
            <person name="Zhang B."/>
            <person name="Zhuang S."/>
            <person name="Wei H."/>
            <person name="Liu B."/>
            <person name="Lei M."/>
            <person name="Yu H."/>
            <person name="Li Y."/>
            <person name="Xu H."/>
            <person name="Wei S."/>
            <person name="He X."/>
            <person name="Fang L."/>
            <person name="Zhang Z."/>
            <person name="Zhang Y."/>
            <person name="Huang X."/>
            <person name="Su Z."/>
            <person name="Tong W."/>
            <person name="Li J."/>
            <person name="Tong Z."/>
            <person name="Li S."/>
            <person name="Ye J."/>
            <person name="Wang L."/>
            <person name="Fang L."/>
            <person name="Lei T."/>
            <person name="Chen C.-S."/>
            <person name="Chen H.-C."/>
            <person name="Xu Z."/>
            <person name="Li H."/>
            <person name="Huang H."/>
            <person name="Zhang F."/>
            <person name="Xu H."/>
            <person name="Li N."/>
            <person name="Zhao C."/>
            <person name="Li S."/>
            <person name="Dong L."/>
            <person name="Huang Y."/>
            <person name="Li L."/>
            <person name="Xi Y."/>
            <person name="Qi Q."/>
            <person name="Li W."/>
            <person name="Zhang B."/>
            <person name="Hu W."/>
            <person name="Zhang Y."/>
            <person name="Tian X."/>
            <person name="Jiao Y."/>
            <person name="Liang X."/>
            <person name="Jin J."/>
            <person name="Gao L."/>
            <person name="Zheng W."/>
            <person name="Hao B."/>
            <person name="Liu S.-M."/>
            <person name="Wang W."/>
            <person name="Yuan L."/>
            <person name="Cao M."/>
            <person name="McDermott J."/>
            <person name="Samudrala R."/>
            <person name="Wang J."/>
            <person name="Wong G.K.-S."/>
            <person name="Yang H."/>
        </authorList>
    </citation>
    <scope>NUCLEOTIDE SEQUENCE [LARGE SCALE GENOMIC DNA]</scope>
    <source>
        <strain>cv. Nipponbare</strain>
    </source>
</reference>
<reference key="6">
    <citation type="journal article" date="2003" name="Science">
        <title>Collection, mapping, and annotation of over 28,000 cDNA clones from japonica rice.</title>
        <authorList>
            <consortium name="The rice full-length cDNA consortium"/>
        </authorList>
    </citation>
    <scope>NUCLEOTIDE SEQUENCE [LARGE SCALE MRNA]</scope>
    <source>
        <strain>cv. Nipponbare</strain>
    </source>
</reference>
<reference key="7">
    <citation type="journal article" date="2010" name="Nature">
        <title>Sugar transporters for intercellular exchange and nutrition of pathogens.</title>
        <authorList>
            <person name="Chen L.-Q."/>
            <person name="Hou B.-H."/>
            <person name="Lalonde S."/>
            <person name="Takanaga H."/>
            <person name="Hartung M.L."/>
            <person name="Qu X.-Q."/>
            <person name="Guo W.-J."/>
            <person name="Kim J.-G."/>
            <person name="Underwood W."/>
            <person name="Chaudhuri B."/>
            <person name="Chermak D."/>
            <person name="Antony G."/>
            <person name="White F.F."/>
            <person name="Somerville S.C."/>
            <person name="Mudgett M.B."/>
            <person name="Frommer W.B."/>
        </authorList>
    </citation>
    <scope>GENE FAMILY</scope>
    <scope>NOMENCLATURE</scope>
</reference>
<reference key="8">
    <citation type="journal article" date="2013" name="New Phytol.">
        <title>Five phylogenetically close rice SWEET genes confer TAL effector-mediated susceptibility to Xanthomonas oryzae pv. oryzae.</title>
        <authorList>
            <person name="Streubel J."/>
            <person name="Pesce C."/>
            <person name="Hutin M."/>
            <person name="Koebnik R."/>
            <person name="Boch J."/>
            <person name="Szurek B."/>
        </authorList>
    </citation>
    <scope>FUNCTION</scope>
    <scope>INDUCTION BY TAL PROTEINS</scope>
    <source>
        <strain>cv. Nipponbare</strain>
    </source>
</reference>
<reference key="9">
    <citation type="journal article" date="2015" name="Curr. Opin. Plant Biol.">
        <title>SWEETs, transporters for intracellular and intercellular sugar translocation.</title>
        <authorList>
            <person name="Eom J.-S."/>
            <person name="Chen L.-Q."/>
            <person name="Sosso D."/>
            <person name="Julius B.T."/>
            <person name="Lin I.W."/>
            <person name="Qu X.-Q."/>
            <person name="Braun D.M."/>
            <person name="Frommer W.B."/>
        </authorList>
    </citation>
    <scope>REVIEW</scope>
</reference>
<gene>
    <name type="primary">SWEET12</name>
    <name type="ordered locus">Os03g0347500</name>
    <name type="ordered locus">LOC_Os03g22590</name>
    <name type="ORF">OsJ_10824</name>
</gene>
<comment type="function">
    <text evidence="1">Mediates both low-affinity uptake and efflux of sugar across the plasma membrane.</text>
</comment>
<comment type="function">
    <text evidence="4 5">Confers blight susceptibility (PubMed:25988582). Confers TAL effector-mediated susceptibility to Xanthomonas oryzae pv. oryzae (PubMed:23879865).</text>
</comment>
<comment type="subunit">
    <text evidence="1">Forms homooligomers and/or heterooligomers.</text>
</comment>
<comment type="subcellular location">
    <subcellularLocation>
        <location evidence="1">Cell membrane</location>
        <topology evidence="1">Multi-pass membrane protein</topology>
    </subcellularLocation>
</comment>
<comment type="induction">
    <text evidence="4">By the X.oryzae pv. oryzae (Xoo) transcription activator-like effector (TALe) proteins (artificial TAL effectors).</text>
</comment>
<comment type="similarity">
    <text evidence="6">Belongs to the SWEET sugar transporter family.</text>
</comment>
<comment type="sequence caution" evidence="6">
    <conflict type="erroneous gene model prediction">
        <sequence resource="EMBL-CDS" id="EEE59052"/>
    </conflict>
</comment>
<proteinExistence type="evidence at transcript level"/>